<organism>
    <name type="scientific">Staphylococcus aureus (strain MSSA476)</name>
    <dbReference type="NCBI Taxonomy" id="282459"/>
    <lineage>
        <taxon>Bacteria</taxon>
        <taxon>Bacillati</taxon>
        <taxon>Bacillota</taxon>
        <taxon>Bacilli</taxon>
        <taxon>Bacillales</taxon>
        <taxon>Staphylococcaceae</taxon>
        <taxon>Staphylococcus</taxon>
    </lineage>
</organism>
<proteinExistence type="inferred from homology"/>
<gene>
    <name evidence="1" type="primary">rplR</name>
    <name type="ordered locus">SAS2125</name>
</gene>
<reference key="1">
    <citation type="journal article" date="2004" name="Proc. Natl. Acad. Sci. U.S.A.">
        <title>Complete genomes of two clinical Staphylococcus aureus strains: evidence for the rapid evolution of virulence and drug resistance.</title>
        <authorList>
            <person name="Holden M.T.G."/>
            <person name="Feil E.J."/>
            <person name="Lindsay J.A."/>
            <person name="Peacock S.J."/>
            <person name="Day N.P.J."/>
            <person name="Enright M.C."/>
            <person name="Foster T.J."/>
            <person name="Moore C.E."/>
            <person name="Hurst L."/>
            <person name="Atkin R."/>
            <person name="Barron A."/>
            <person name="Bason N."/>
            <person name="Bentley S.D."/>
            <person name="Chillingworth C."/>
            <person name="Chillingworth T."/>
            <person name="Churcher C."/>
            <person name="Clark L."/>
            <person name="Corton C."/>
            <person name="Cronin A."/>
            <person name="Doggett J."/>
            <person name="Dowd L."/>
            <person name="Feltwell T."/>
            <person name="Hance Z."/>
            <person name="Harris B."/>
            <person name="Hauser H."/>
            <person name="Holroyd S."/>
            <person name="Jagels K."/>
            <person name="James K.D."/>
            <person name="Lennard N."/>
            <person name="Line A."/>
            <person name="Mayes R."/>
            <person name="Moule S."/>
            <person name="Mungall K."/>
            <person name="Ormond D."/>
            <person name="Quail M.A."/>
            <person name="Rabbinowitsch E."/>
            <person name="Rutherford K.M."/>
            <person name="Sanders M."/>
            <person name="Sharp S."/>
            <person name="Simmonds M."/>
            <person name="Stevens K."/>
            <person name="Whitehead S."/>
            <person name="Barrell B.G."/>
            <person name="Spratt B.G."/>
            <person name="Parkhill J."/>
        </authorList>
    </citation>
    <scope>NUCLEOTIDE SEQUENCE [LARGE SCALE GENOMIC DNA]</scope>
    <source>
        <strain>MSSA476</strain>
    </source>
</reference>
<evidence type="ECO:0000255" key="1">
    <source>
        <dbReference type="HAMAP-Rule" id="MF_01337"/>
    </source>
</evidence>
<evidence type="ECO:0000305" key="2"/>
<feature type="chain" id="PRO_0000131346" description="Large ribosomal subunit protein uL18">
    <location>
        <begin position="1"/>
        <end position="119"/>
    </location>
</feature>
<name>RL18_STAAS</name>
<dbReference type="EMBL" id="BX571857">
    <property type="protein sequence ID" value="CAG43936.1"/>
    <property type="molecule type" value="Genomic_DNA"/>
</dbReference>
<dbReference type="RefSeq" id="WP_000623881.1">
    <property type="nucleotide sequence ID" value="NC_002953.3"/>
</dbReference>
<dbReference type="SMR" id="Q6G787"/>
<dbReference type="KEGG" id="sas:SAS2125"/>
<dbReference type="HOGENOM" id="CLU_098841_0_1_9"/>
<dbReference type="GO" id="GO:0022625">
    <property type="term" value="C:cytosolic large ribosomal subunit"/>
    <property type="evidence" value="ECO:0007669"/>
    <property type="project" value="TreeGrafter"/>
</dbReference>
<dbReference type="GO" id="GO:0008097">
    <property type="term" value="F:5S rRNA binding"/>
    <property type="evidence" value="ECO:0007669"/>
    <property type="project" value="TreeGrafter"/>
</dbReference>
<dbReference type="GO" id="GO:0003735">
    <property type="term" value="F:structural constituent of ribosome"/>
    <property type="evidence" value="ECO:0007669"/>
    <property type="project" value="InterPro"/>
</dbReference>
<dbReference type="GO" id="GO:0006412">
    <property type="term" value="P:translation"/>
    <property type="evidence" value="ECO:0007669"/>
    <property type="project" value="UniProtKB-UniRule"/>
</dbReference>
<dbReference type="CDD" id="cd00432">
    <property type="entry name" value="Ribosomal_L18_L5e"/>
    <property type="match status" value="1"/>
</dbReference>
<dbReference type="FunFam" id="3.30.420.100:FF:000001">
    <property type="entry name" value="50S ribosomal protein L18"/>
    <property type="match status" value="1"/>
</dbReference>
<dbReference type="Gene3D" id="3.30.420.100">
    <property type="match status" value="1"/>
</dbReference>
<dbReference type="HAMAP" id="MF_01337_B">
    <property type="entry name" value="Ribosomal_uL18_B"/>
    <property type="match status" value="1"/>
</dbReference>
<dbReference type="InterPro" id="IPR004389">
    <property type="entry name" value="Ribosomal_uL18_bac-type"/>
</dbReference>
<dbReference type="InterPro" id="IPR005484">
    <property type="entry name" value="Ribosomal_uL18_bac/euk"/>
</dbReference>
<dbReference type="NCBIfam" id="TIGR00060">
    <property type="entry name" value="L18_bact"/>
    <property type="match status" value="1"/>
</dbReference>
<dbReference type="PANTHER" id="PTHR12899">
    <property type="entry name" value="39S RIBOSOMAL PROTEIN L18, MITOCHONDRIAL"/>
    <property type="match status" value="1"/>
</dbReference>
<dbReference type="PANTHER" id="PTHR12899:SF3">
    <property type="entry name" value="LARGE RIBOSOMAL SUBUNIT PROTEIN UL18M"/>
    <property type="match status" value="1"/>
</dbReference>
<dbReference type="Pfam" id="PF00861">
    <property type="entry name" value="Ribosomal_L18p"/>
    <property type="match status" value="1"/>
</dbReference>
<dbReference type="SUPFAM" id="SSF53137">
    <property type="entry name" value="Translational machinery components"/>
    <property type="match status" value="1"/>
</dbReference>
<accession>Q6G787</accession>
<protein>
    <recommendedName>
        <fullName evidence="1">Large ribosomal subunit protein uL18</fullName>
    </recommendedName>
    <alternativeName>
        <fullName evidence="2">50S ribosomal protein L18</fullName>
    </alternativeName>
</protein>
<comment type="function">
    <text evidence="1">This is one of the proteins that bind and probably mediate the attachment of the 5S RNA into the large ribosomal subunit, where it forms part of the central protuberance.</text>
</comment>
<comment type="subunit">
    <text evidence="1">Part of the 50S ribosomal subunit; part of the 5S rRNA/L5/L18/L25 subcomplex. Contacts the 5S and 23S rRNAs.</text>
</comment>
<comment type="similarity">
    <text evidence="1">Belongs to the universal ribosomal protein uL18 family.</text>
</comment>
<sequence length="119" mass="13097">MISKIDKNKVRLKRHARVRTNLSGTAEKPRLNVYRSNKHIYAQIIDDNKGVTLAQASSKDSDIATTATKVELATKVGEAIAKKAADKGIKEIVFDRGGYLYHGRVKALAEAARESGLEF</sequence>
<keyword id="KW-0687">Ribonucleoprotein</keyword>
<keyword id="KW-0689">Ribosomal protein</keyword>
<keyword id="KW-0694">RNA-binding</keyword>
<keyword id="KW-0699">rRNA-binding</keyword>